<protein>
    <recommendedName>
        <fullName evidence="3">Pancreatic polypeptide</fullName>
        <shortName evidence="3">PP</shortName>
    </recommendedName>
</protein>
<reference key="1">
    <citation type="journal article" date="1990" name="Regul. Pept.">
        <title>The complete primary structure of pancreatic polypeptide from the European common frog, Rana temporaria.</title>
        <authorList>
            <person name="McKay D.M."/>
            <person name="Shaw C."/>
            <person name="Thim L."/>
            <person name="Johnston C.F."/>
            <person name="Halton D.W."/>
            <person name="Fairweather I."/>
            <person name="Buchanan K.D."/>
        </authorList>
    </citation>
    <scope>PROTEIN SEQUENCE</scope>
    <scope>AMIDATION AT PHE-36</scope>
    <source>
        <tissue>Pancreas</tissue>
    </source>
</reference>
<evidence type="ECO:0000250" key="1">
    <source>
        <dbReference type="UniProtKB" id="P01298"/>
    </source>
</evidence>
<evidence type="ECO:0000269" key="2">
    <source>
    </source>
</evidence>
<evidence type="ECO:0000303" key="3">
    <source>
    </source>
</evidence>
<evidence type="ECO:0000305" key="4"/>
<name>PAHO_RANTE</name>
<feature type="peptide" id="PRO_0000044809" description="Pancreatic polypeptide">
    <location>
        <begin position="1"/>
        <end position="36"/>
    </location>
</feature>
<feature type="modified residue" description="Phenylalanine amide" evidence="2">
    <location>
        <position position="36"/>
    </location>
</feature>
<accession>P31229</accession>
<dbReference type="PIR" id="A60074">
    <property type="entry name" value="PCFG"/>
</dbReference>
<dbReference type="SMR" id="P31229"/>
<dbReference type="GO" id="GO:0005576">
    <property type="term" value="C:extracellular region"/>
    <property type="evidence" value="ECO:0007669"/>
    <property type="project" value="UniProtKB-SubCell"/>
</dbReference>
<dbReference type="GO" id="GO:0005179">
    <property type="term" value="F:hormone activity"/>
    <property type="evidence" value="ECO:0007669"/>
    <property type="project" value="UniProtKB-KW"/>
</dbReference>
<dbReference type="CDD" id="cd00126">
    <property type="entry name" value="PAH"/>
    <property type="match status" value="1"/>
</dbReference>
<dbReference type="Gene3D" id="6.10.250.900">
    <property type="match status" value="1"/>
</dbReference>
<dbReference type="InterPro" id="IPR001955">
    <property type="entry name" value="Pancreatic_hormone-like"/>
</dbReference>
<dbReference type="InterPro" id="IPR020392">
    <property type="entry name" value="Pancreatic_hormone-like_CS"/>
</dbReference>
<dbReference type="Pfam" id="PF00159">
    <property type="entry name" value="Hormone_3"/>
    <property type="match status" value="1"/>
</dbReference>
<dbReference type="PRINTS" id="PR00278">
    <property type="entry name" value="PANCHORMONE"/>
</dbReference>
<dbReference type="SMART" id="SM00309">
    <property type="entry name" value="PAH"/>
    <property type="match status" value="1"/>
</dbReference>
<dbReference type="PROSITE" id="PS00265">
    <property type="entry name" value="PANCREATIC_HORMONE_1"/>
    <property type="match status" value="1"/>
</dbReference>
<dbReference type="PROSITE" id="PS50276">
    <property type="entry name" value="PANCREATIC_HORMONE_2"/>
    <property type="match status" value="1"/>
</dbReference>
<proteinExistence type="evidence at protein level"/>
<organism>
    <name type="scientific">Rana temporaria</name>
    <name type="common">European common frog</name>
    <dbReference type="NCBI Taxonomy" id="8407"/>
    <lineage>
        <taxon>Eukaryota</taxon>
        <taxon>Metazoa</taxon>
        <taxon>Chordata</taxon>
        <taxon>Craniata</taxon>
        <taxon>Vertebrata</taxon>
        <taxon>Euteleostomi</taxon>
        <taxon>Amphibia</taxon>
        <taxon>Batrachia</taxon>
        <taxon>Anura</taxon>
        <taxon>Neobatrachia</taxon>
        <taxon>Ranoidea</taxon>
        <taxon>Ranidae</taxon>
        <taxon>Rana</taxon>
        <taxon>Rana</taxon>
    </lineage>
</organism>
<gene>
    <name type="primary">ppy</name>
</gene>
<keyword id="KW-0027">Amidation</keyword>
<keyword id="KW-0903">Direct protein sequencing</keyword>
<keyword id="KW-0372">Hormone</keyword>
<keyword id="KW-0964">Secreted</keyword>
<comment type="function">
    <text evidence="1">Hormone secreted by pancreatic cells that acts as a regulator of pancreatic and gastrointestinal functions.</text>
</comment>
<comment type="subcellular location">
    <subcellularLocation>
        <location evidence="1">Secreted</location>
    </subcellularLocation>
</comment>
<comment type="similarity">
    <text evidence="4">Belongs to the NPY family.</text>
</comment>
<sequence>APSEPHHPGDQATQDQLAQYYSDLYQYITFVTRPRF</sequence>